<sequence length="340" mass="38272">MREQLDQIRREAAEALCAVDTMEALQDWRVRILGKKGVLTGILRGLGALPAEERPLMGALVNEVRAELEFKLEEKSRELKAREKEARLSGESIDITLPGRVQPVGGKHPLTLVIDEIKQIFLGMGYEIAEGPEVELDYYNFEALNLPQDHPARDMQDSFYITSDILLRTHTSPVQIRAMERIRPQLPVKVICPGRVFRRDDDATHSPMFHQVEGLVVDKGITFGDLRGTLLTFARQMFGPDREIRLRPSFFPFTEPSAEVDISCVICGGGGCRVCKGSGWLEILGSGMVHPRVLEYGGYNPQEVTGFAFGMGVERIAMLKYGIDDMRLLYENDMRFLAQF</sequence>
<proteinExistence type="inferred from homology"/>
<comment type="catalytic activity">
    <reaction evidence="1">
        <text>tRNA(Phe) + L-phenylalanine + ATP = L-phenylalanyl-tRNA(Phe) + AMP + diphosphate + H(+)</text>
        <dbReference type="Rhea" id="RHEA:19413"/>
        <dbReference type="Rhea" id="RHEA-COMP:9668"/>
        <dbReference type="Rhea" id="RHEA-COMP:9699"/>
        <dbReference type="ChEBI" id="CHEBI:15378"/>
        <dbReference type="ChEBI" id="CHEBI:30616"/>
        <dbReference type="ChEBI" id="CHEBI:33019"/>
        <dbReference type="ChEBI" id="CHEBI:58095"/>
        <dbReference type="ChEBI" id="CHEBI:78442"/>
        <dbReference type="ChEBI" id="CHEBI:78531"/>
        <dbReference type="ChEBI" id="CHEBI:456215"/>
        <dbReference type="EC" id="6.1.1.20"/>
    </reaction>
</comment>
<comment type="cofactor">
    <cofactor evidence="1">
        <name>Mg(2+)</name>
        <dbReference type="ChEBI" id="CHEBI:18420"/>
    </cofactor>
    <text evidence="1">Binds 2 magnesium ions per tetramer.</text>
</comment>
<comment type="subunit">
    <text evidence="1">Tetramer of two alpha and two beta subunits.</text>
</comment>
<comment type="subcellular location">
    <subcellularLocation>
        <location evidence="1">Cytoplasm</location>
    </subcellularLocation>
</comment>
<comment type="similarity">
    <text evidence="1">Belongs to the class-II aminoacyl-tRNA synthetase family. Phe-tRNA synthetase alpha subunit type 1 subfamily.</text>
</comment>
<gene>
    <name evidence="1" type="primary">pheS</name>
    <name type="ordered locus">Helmi_17360</name>
    <name type="ORF">HM1_1797</name>
</gene>
<protein>
    <recommendedName>
        <fullName evidence="1">Phenylalanine--tRNA ligase alpha subunit</fullName>
        <ecNumber evidence="1">6.1.1.20</ecNumber>
    </recommendedName>
    <alternativeName>
        <fullName evidence="1">Phenylalanyl-tRNA synthetase alpha subunit</fullName>
        <shortName evidence="1">PheRS</shortName>
    </alternativeName>
</protein>
<reference key="1">
    <citation type="journal article" date="2008" name="J. Bacteriol.">
        <title>The genome of Heliobacterium modesticaldum, a phototrophic representative of the Firmicutes containing the simplest photosynthetic apparatus.</title>
        <authorList>
            <person name="Sattley W.M."/>
            <person name="Madigan M.T."/>
            <person name="Swingley W.D."/>
            <person name="Cheung P.C."/>
            <person name="Clocksin K.M."/>
            <person name="Conrad A.L."/>
            <person name="Dejesa L.C."/>
            <person name="Honchak B.M."/>
            <person name="Jung D.O."/>
            <person name="Karbach L.E."/>
            <person name="Kurdoglu A."/>
            <person name="Lahiri S."/>
            <person name="Mastrian S.D."/>
            <person name="Page L.E."/>
            <person name="Taylor H.L."/>
            <person name="Wang Z.T."/>
            <person name="Raymond J."/>
            <person name="Chen M."/>
            <person name="Blankenship R.E."/>
            <person name="Touchman J.W."/>
        </authorList>
    </citation>
    <scope>NUCLEOTIDE SEQUENCE [LARGE SCALE GENOMIC DNA]</scope>
    <source>
        <strain>ATCC 51547 / Ice1</strain>
    </source>
</reference>
<keyword id="KW-0030">Aminoacyl-tRNA synthetase</keyword>
<keyword id="KW-0067">ATP-binding</keyword>
<keyword id="KW-0963">Cytoplasm</keyword>
<keyword id="KW-0436">Ligase</keyword>
<keyword id="KW-0460">Magnesium</keyword>
<keyword id="KW-0479">Metal-binding</keyword>
<keyword id="KW-0547">Nucleotide-binding</keyword>
<keyword id="KW-0648">Protein biosynthesis</keyword>
<keyword id="KW-1185">Reference proteome</keyword>
<feature type="chain" id="PRO_1000114878" description="Phenylalanine--tRNA ligase alpha subunit">
    <location>
        <begin position="1"/>
        <end position="340"/>
    </location>
</feature>
<feature type="binding site" evidence="1">
    <location>
        <position position="255"/>
    </location>
    <ligand>
        <name>Mg(2+)</name>
        <dbReference type="ChEBI" id="CHEBI:18420"/>
        <note>shared with beta subunit</note>
    </ligand>
</feature>
<name>SYFA_HELMI</name>
<dbReference type="EC" id="6.1.1.20" evidence="1"/>
<dbReference type="EMBL" id="CP000930">
    <property type="protein sequence ID" value="ABZ84361.1"/>
    <property type="molecule type" value="Genomic_DNA"/>
</dbReference>
<dbReference type="RefSeq" id="WP_012282865.1">
    <property type="nucleotide sequence ID" value="NC_010337.2"/>
</dbReference>
<dbReference type="SMR" id="B0TEV9"/>
<dbReference type="STRING" id="498761.HM1_1797"/>
<dbReference type="KEGG" id="hmo:HM1_1797"/>
<dbReference type="eggNOG" id="COG0016">
    <property type="taxonomic scope" value="Bacteria"/>
</dbReference>
<dbReference type="HOGENOM" id="CLU_025086_0_1_9"/>
<dbReference type="OrthoDB" id="9800719at2"/>
<dbReference type="Proteomes" id="UP000008550">
    <property type="component" value="Chromosome"/>
</dbReference>
<dbReference type="GO" id="GO:0005737">
    <property type="term" value="C:cytoplasm"/>
    <property type="evidence" value="ECO:0007669"/>
    <property type="project" value="UniProtKB-SubCell"/>
</dbReference>
<dbReference type="GO" id="GO:0005524">
    <property type="term" value="F:ATP binding"/>
    <property type="evidence" value="ECO:0007669"/>
    <property type="project" value="UniProtKB-UniRule"/>
</dbReference>
<dbReference type="GO" id="GO:0140096">
    <property type="term" value="F:catalytic activity, acting on a protein"/>
    <property type="evidence" value="ECO:0007669"/>
    <property type="project" value="UniProtKB-ARBA"/>
</dbReference>
<dbReference type="GO" id="GO:0000287">
    <property type="term" value="F:magnesium ion binding"/>
    <property type="evidence" value="ECO:0007669"/>
    <property type="project" value="UniProtKB-UniRule"/>
</dbReference>
<dbReference type="GO" id="GO:0004826">
    <property type="term" value="F:phenylalanine-tRNA ligase activity"/>
    <property type="evidence" value="ECO:0007669"/>
    <property type="project" value="UniProtKB-UniRule"/>
</dbReference>
<dbReference type="GO" id="GO:0016740">
    <property type="term" value="F:transferase activity"/>
    <property type="evidence" value="ECO:0007669"/>
    <property type="project" value="UniProtKB-ARBA"/>
</dbReference>
<dbReference type="GO" id="GO:0000049">
    <property type="term" value="F:tRNA binding"/>
    <property type="evidence" value="ECO:0007669"/>
    <property type="project" value="InterPro"/>
</dbReference>
<dbReference type="GO" id="GO:0006432">
    <property type="term" value="P:phenylalanyl-tRNA aminoacylation"/>
    <property type="evidence" value="ECO:0007669"/>
    <property type="project" value="UniProtKB-UniRule"/>
</dbReference>
<dbReference type="CDD" id="cd00496">
    <property type="entry name" value="PheRS_alpha_core"/>
    <property type="match status" value="1"/>
</dbReference>
<dbReference type="FunFam" id="3.30.930.10:FF:000003">
    <property type="entry name" value="Phenylalanine--tRNA ligase alpha subunit"/>
    <property type="match status" value="1"/>
</dbReference>
<dbReference type="Gene3D" id="3.30.930.10">
    <property type="entry name" value="Bira Bifunctional Protein, Domain 2"/>
    <property type="match status" value="1"/>
</dbReference>
<dbReference type="HAMAP" id="MF_00281">
    <property type="entry name" value="Phe_tRNA_synth_alpha1"/>
    <property type="match status" value="1"/>
</dbReference>
<dbReference type="InterPro" id="IPR006195">
    <property type="entry name" value="aa-tRNA-synth_II"/>
</dbReference>
<dbReference type="InterPro" id="IPR045864">
    <property type="entry name" value="aa-tRNA-synth_II/BPL/LPL"/>
</dbReference>
<dbReference type="InterPro" id="IPR004529">
    <property type="entry name" value="Phe-tRNA-synth_IIc_asu"/>
</dbReference>
<dbReference type="InterPro" id="IPR004188">
    <property type="entry name" value="Phe-tRNA_ligase_II_N"/>
</dbReference>
<dbReference type="InterPro" id="IPR022911">
    <property type="entry name" value="Phe_tRNA_ligase_alpha1_bac"/>
</dbReference>
<dbReference type="InterPro" id="IPR002319">
    <property type="entry name" value="Phenylalanyl-tRNA_Synthase"/>
</dbReference>
<dbReference type="InterPro" id="IPR010978">
    <property type="entry name" value="tRNA-bd_arm"/>
</dbReference>
<dbReference type="NCBIfam" id="TIGR00468">
    <property type="entry name" value="pheS"/>
    <property type="match status" value="1"/>
</dbReference>
<dbReference type="PANTHER" id="PTHR11538:SF41">
    <property type="entry name" value="PHENYLALANINE--TRNA LIGASE, MITOCHONDRIAL"/>
    <property type="match status" value="1"/>
</dbReference>
<dbReference type="PANTHER" id="PTHR11538">
    <property type="entry name" value="PHENYLALANYL-TRNA SYNTHETASE"/>
    <property type="match status" value="1"/>
</dbReference>
<dbReference type="Pfam" id="PF02912">
    <property type="entry name" value="Phe_tRNA-synt_N"/>
    <property type="match status" value="1"/>
</dbReference>
<dbReference type="Pfam" id="PF01409">
    <property type="entry name" value="tRNA-synt_2d"/>
    <property type="match status" value="1"/>
</dbReference>
<dbReference type="SUPFAM" id="SSF55681">
    <property type="entry name" value="Class II aaRS and biotin synthetases"/>
    <property type="match status" value="1"/>
</dbReference>
<dbReference type="SUPFAM" id="SSF46589">
    <property type="entry name" value="tRNA-binding arm"/>
    <property type="match status" value="1"/>
</dbReference>
<dbReference type="PROSITE" id="PS50862">
    <property type="entry name" value="AA_TRNA_LIGASE_II"/>
    <property type="match status" value="1"/>
</dbReference>
<accession>B0TEV9</accession>
<organism>
    <name type="scientific">Heliobacterium modesticaldum (strain ATCC 51547 / Ice1)</name>
    <dbReference type="NCBI Taxonomy" id="498761"/>
    <lineage>
        <taxon>Bacteria</taxon>
        <taxon>Bacillati</taxon>
        <taxon>Bacillota</taxon>
        <taxon>Clostridia</taxon>
        <taxon>Eubacteriales</taxon>
        <taxon>Heliobacteriaceae</taxon>
        <taxon>Heliomicrobium</taxon>
    </lineage>
</organism>
<evidence type="ECO:0000255" key="1">
    <source>
        <dbReference type="HAMAP-Rule" id="MF_00281"/>
    </source>
</evidence>